<feature type="chain" id="PRO_1000066723" description="Acyl carrier protein">
    <location>
        <begin position="1"/>
        <end position="78"/>
    </location>
</feature>
<feature type="domain" description="Carrier" evidence="2">
    <location>
        <begin position="2"/>
        <end position="77"/>
    </location>
</feature>
<feature type="modified residue" description="O-(pantetheine 4'-phosphoryl)serine" evidence="2">
    <location>
        <position position="37"/>
    </location>
</feature>
<sequence length="78" mass="8701">MSTIEERVKKIIVEQLGVKEDEVKNSASFVEDLGADSLDTVELVMALEEEFDTEIPDEEAEKITTVQAAIDFINANQQ</sequence>
<reference key="1">
    <citation type="submission" date="2007-02" db="EMBL/GenBank/DDBJ databases">
        <title>Complete sequence of chromosome of Yersinia pestis Pestoides F.</title>
        <authorList>
            <consortium name="US DOE Joint Genome Institute"/>
            <person name="Copeland A."/>
            <person name="Lucas S."/>
            <person name="Lapidus A."/>
            <person name="Barry K."/>
            <person name="Detter J.C."/>
            <person name="Glavina del Rio T."/>
            <person name="Hammon N."/>
            <person name="Israni S."/>
            <person name="Dalin E."/>
            <person name="Tice H."/>
            <person name="Pitluck S."/>
            <person name="Di Bartolo G."/>
            <person name="Chain P."/>
            <person name="Malfatti S."/>
            <person name="Shin M."/>
            <person name="Vergez L."/>
            <person name="Schmutz J."/>
            <person name="Larimer F."/>
            <person name="Land M."/>
            <person name="Hauser L."/>
            <person name="Worsham P."/>
            <person name="Chu M."/>
            <person name="Bearden S."/>
            <person name="Garcia E."/>
            <person name="Richardson P."/>
        </authorList>
    </citation>
    <scope>NUCLEOTIDE SEQUENCE [LARGE SCALE GENOMIC DNA]</scope>
    <source>
        <strain>Pestoides F</strain>
    </source>
</reference>
<organism>
    <name type="scientific">Yersinia pestis (strain Pestoides F)</name>
    <dbReference type="NCBI Taxonomy" id="386656"/>
    <lineage>
        <taxon>Bacteria</taxon>
        <taxon>Pseudomonadati</taxon>
        <taxon>Pseudomonadota</taxon>
        <taxon>Gammaproteobacteria</taxon>
        <taxon>Enterobacterales</taxon>
        <taxon>Yersiniaceae</taxon>
        <taxon>Yersinia</taxon>
    </lineage>
</organism>
<dbReference type="EMBL" id="CP000668">
    <property type="protein sequence ID" value="ABP40232.1"/>
    <property type="molecule type" value="Genomic_DNA"/>
</dbReference>
<dbReference type="RefSeq" id="WP_002220787.1">
    <property type="nucleotide sequence ID" value="NZ_CP009715.1"/>
</dbReference>
<dbReference type="SMR" id="A4TLS0"/>
<dbReference type="GeneID" id="97455792"/>
<dbReference type="KEGG" id="ypp:YPDSF_1847"/>
<dbReference type="PATRIC" id="fig|386656.14.peg.3302"/>
<dbReference type="UniPathway" id="UPA00094"/>
<dbReference type="GO" id="GO:0005829">
    <property type="term" value="C:cytosol"/>
    <property type="evidence" value="ECO:0007669"/>
    <property type="project" value="TreeGrafter"/>
</dbReference>
<dbReference type="GO" id="GO:0016020">
    <property type="term" value="C:membrane"/>
    <property type="evidence" value="ECO:0007669"/>
    <property type="project" value="GOC"/>
</dbReference>
<dbReference type="GO" id="GO:0000035">
    <property type="term" value="F:acyl binding"/>
    <property type="evidence" value="ECO:0007669"/>
    <property type="project" value="TreeGrafter"/>
</dbReference>
<dbReference type="GO" id="GO:0000036">
    <property type="term" value="F:acyl carrier activity"/>
    <property type="evidence" value="ECO:0007669"/>
    <property type="project" value="UniProtKB-UniRule"/>
</dbReference>
<dbReference type="GO" id="GO:0009245">
    <property type="term" value="P:lipid A biosynthetic process"/>
    <property type="evidence" value="ECO:0007669"/>
    <property type="project" value="TreeGrafter"/>
</dbReference>
<dbReference type="FunFam" id="1.10.1200.10:FF:000001">
    <property type="entry name" value="Acyl carrier protein"/>
    <property type="match status" value="1"/>
</dbReference>
<dbReference type="Gene3D" id="1.10.1200.10">
    <property type="entry name" value="ACP-like"/>
    <property type="match status" value="1"/>
</dbReference>
<dbReference type="HAMAP" id="MF_01217">
    <property type="entry name" value="Acyl_carrier"/>
    <property type="match status" value="1"/>
</dbReference>
<dbReference type="InterPro" id="IPR003231">
    <property type="entry name" value="ACP"/>
</dbReference>
<dbReference type="InterPro" id="IPR036736">
    <property type="entry name" value="ACP-like_sf"/>
</dbReference>
<dbReference type="InterPro" id="IPR009081">
    <property type="entry name" value="PP-bd_ACP"/>
</dbReference>
<dbReference type="InterPro" id="IPR006162">
    <property type="entry name" value="Ppantetheine_attach_site"/>
</dbReference>
<dbReference type="NCBIfam" id="TIGR00517">
    <property type="entry name" value="acyl_carrier"/>
    <property type="match status" value="1"/>
</dbReference>
<dbReference type="NCBIfam" id="NF002148">
    <property type="entry name" value="PRK00982.1-2"/>
    <property type="match status" value="1"/>
</dbReference>
<dbReference type="NCBIfam" id="NF002149">
    <property type="entry name" value="PRK00982.1-3"/>
    <property type="match status" value="1"/>
</dbReference>
<dbReference type="NCBIfam" id="NF002150">
    <property type="entry name" value="PRK00982.1-4"/>
    <property type="match status" value="1"/>
</dbReference>
<dbReference type="NCBIfam" id="NF002151">
    <property type="entry name" value="PRK00982.1-5"/>
    <property type="match status" value="1"/>
</dbReference>
<dbReference type="PANTHER" id="PTHR20863">
    <property type="entry name" value="ACYL CARRIER PROTEIN"/>
    <property type="match status" value="1"/>
</dbReference>
<dbReference type="PANTHER" id="PTHR20863:SF76">
    <property type="entry name" value="CARRIER DOMAIN-CONTAINING PROTEIN"/>
    <property type="match status" value="1"/>
</dbReference>
<dbReference type="Pfam" id="PF00550">
    <property type="entry name" value="PP-binding"/>
    <property type="match status" value="1"/>
</dbReference>
<dbReference type="SUPFAM" id="SSF47336">
    <property type="entry name" value="ACP-like"/>
    <property type="match status" value="1"/>
</dbReference>
<dbReference type="PROSITE" id="PS50075">
    <property type="entry name" value="CARRIER"/>
    <property type="match status" value="1"/>
</dbReference>
<dbReference type="PROSITE" id="PS00012">
    <property type="entry name" value="PHOSPHOPANTETHEINE"/>
    <property type="match status" value="1"/>
</dbReference>
<comment type="function">
    <text evidence="1">Carrier of the growing fatty acid chain in fatty acid biosynthesis.</text>
</comment>
<comment type="pathway">
    <text evidence="1">Lipid metabolism; fatty acid biosynthesis.</text>
</comment>
<comment type="subcellular location">
    <subcellularLocation>
        <location evidence="1">Cytoplasm</location>
    </subcellularLocation>
</comment>
<comment type="PTM">
    <text evidence="1">4'-phosphopantetheine is transferred from CoA to a specific serine of apo-ACP by AcpS. This modification is essential for activity because fatty acids are bound in thioester linkage to the sulfhydryl of the prosthetic group.</text>
</comment>
<comment type="similarity">
    <text evidence="1">Belongs to the acyl carrier protein (ACP) family.</text>
</comment>
<evidence type="ECO:0000255" key="1">
    <source>
        <dbReference type="HAMAP-Rule" id="MF_01217"/>
    </source>
</evidence>
<evidence type="ECO:0000255" key="2">
    <source>
        <dbReference type="PROSITE-ProRule" id="PRU00258"/>
    </source>
</evidence>
<name>ACP_YERPP</name>
<gene>
    <name evidence="1" type="primary">acpP</name>
    <name type="ordered locus">YPDSF_1847</name>
</gene>
<keyword id="KW-0963">Cytoplasm</keyword>
<keyword id="KW-0275">Fatty acid biosynthesis</keyword>
<keyword id="KW-0276">Fatty acid metabolism</keyword>
<keyword id="KW-0444">Lipid biosynthesis</keyword>
<keyword id="KW-0443">Lipid metabolism</keyword>
<keyword id="KW-0596">Phosphopantetheine</keyword>
<keyword id="KW-0597">Phosphoprotein</keyword>
<proteinExistence type="inferred from homology"/>
<protein>
    <recommendedName>
        <fullName evidence="1">Acyl carrier protein</fullName>
        <shortName evidence="1">ACP</shortName>
    </recommendedName>
</protein>
<accession>A4TLS0</accession>